<gene>
    <name evidence="1" type="primary">mnmE</name>
    <name evidence="1" type="synonym">trmE</name>
    <name type="ordered locus">SAB2588c</name>
</gene>
<reference key="1">
    <citation type="journal article" date="2007" name="PLoS ONE">
        <title>Molecular correlates of host specialization in Staphylococcus aureus.</title>
        <authorList>
            <person name="Herron-Olson L."/>
            <person name="Fitzgerald J.R."/>
            <person name="Musser J.M."/>
            <person name="Kapur V."/>
        </authorList>
    </citation>
    <scope>NUCLEOTIDE SEQUENCE [LARGE SCALE GENOMIC DNA]</scope>
    <source>
        <strain>bovine RF122 / ET3-1</strain>
    </source>
</reference>
<feature type="chain" id="PRO_1000048884" description="tRNA modification GTPase MnmE">
    <location>
        <begin position="1"/>
        <end position="459"/>
    </location>
</feature>
<feature type="domain" description="TrmE-type G">
    <location>
        <begin position="221"/>
        <end position="380"/>
    </location>
</feature>
<feature type="binding site" evidence="1">
    <location>
        <position position="22"/>
    </location>
    <ligand>
        <name>(6S)-5-formyl-5,6,7,8-tetrahydrofolate</name>
        <dbReference type="ChEBI" id="CHEBI:57457"/>
    </ligand>
</feature>
<feature type="binding site" evidence="1">
    <location>
        <position position="85"/>
    </location>
    <ligand>
        <name>(6S)-5-formyl-5,6,7,8-tetrahydrofolate</name>
        <dbReference type="ChEBI" id="CHEBI:57457"/>
    </ligand>
</feature>
<feature type="binding site" evidence="1">
    <location>
        <position position="124"/>
    </location>
    <ligand>
        <name>(6S)-5-formyl-5,6,7,8-tetrahydrofolate</name>
        <dbReference type="ChEBI" id="CHEBI:57457"/>
    </ligand>
</feature>
<feature type="binding site" evidence="1">
    <location>
        <begin position="231"/>
        <end position="236"/>
    </location>
    <ligand>
        <name>GTP</name>
        <dbReference type="ChEBI" id="CHEBI:37565"/>
    </ligand>
</feature>
<feature type="binding site" evidence="1">
    <location>
        <position position="231"/>
    </location>
    <ligand>
        <name>K(+)</name>
        <dbReference type="ChEBI" id="CHEBI:29103"/>
    </ligand>
</feature>
<feature type="binding site" evidence="1">
    <location>
        <position position="235"/>
    </location>
    <ligand>
        <name>Mg(2+)</name>
        <dbReference type="ChEBI" id="CHEBI:18420"/>
    </ligand>
</feature>
<feature type="binding site" evidence="1">
    <location>
        <begin position="250"/>
        <end position="256"/>
    </location>
    <ligand>
        <name>GTP</name>
        <dbReference type="ChEBI" id="CHEBI:37565"/>
    </ligand>
</feature>
<feature type="binding site" evidence="1">
    <location>
        <position position="250"/>
    </location>
    <ligand>
        <name>K(+)</name>
        <dbReference type="ChEBI" id="CHEBI:29103"/>
    </ligand>
</feature>
<feature type="binding site" evidence="1">
    <location>
        <position position="252"/>
    </location>
    <ligand>
        <name>K(+)</name>
        <dbReference type="ChEBI" id="CHEBI:29103"/>
    </ligand>
</feature>
<feature type="binding site" evidence="1">
    <location>
        <position position="255"/>
    </location>
    <ligand>
        <name>K(+)</name>
        <dbReference type="ChEBI" id="CHEBI:29103"/>
    </ligand>
</feature>
<feature type="binding site" evidence="1">
    <location>
        <position position="256"/>
    </location>
    <ligand>
        <name>Mg(2+)</name>
        <dbReference type="ChEBI" id="CHEBI:18420"/>
    </ligand>
</feature>
<feature type="binding site" evidence="1">
    <location>
        <begin position="275"/>
        <end position="278"/>
    </location>
    <ligand>
        <name>GTP</name>
        <dbReference type="ChEBI" id="CHEBI:37565"/>
    </ligand>
</feature>
<feature type="binding site" evidence="1">
    <location>
        <position position="459"/>
    </location>
    <ligand>
        <name>(6S)-5-formyl-5,6,7,8-tetrahydrofolate</name>
        <dbReference type="ChEBI" id="CHEBI:57457"/>
    </ligand>
</feature>
<evidence type="ECO:0000255" key="1">
    <source>
        <dbReference type="HAMAP-Rule" id="MF_00379"/>
    </source>
</evidence>
<comment type="function">
    <text evidence="1">Exhibits a very high intrinsic GTPase hydrolysis rate. Involved in the addition of a carboxymethylaminomethyl (cmnm) group at the wobble position (U34) of certain tRNAs, forming tRNA-cmnm(5)s(2)U34.</text>
</comment>
<comment type="cofactor">
    <cofactor evidence="1">
        <name>K(+)</name>
        <dbReference type="ChEBI" id="CHEBI:29103"/>
    </cofactor>
    <text evidence="1">Binds 1 potassium ion per subunit.</text>
</comment>
<comment type="subunit">
    <text evidence="1">Homodimer. Heterotetramer of two MnmE and two MnmG subunits.</text>
</comment>
<comment type="subcellular location">
    <subcellularLocation>
        <location evidence="1">Cytoplasm</location>
    </subcellularLocation>
</comment>
<comment type="similarity">
    <text evidence="1">Belongs to the TRAFAC class TrmE-Era-EngA-EngB-Septin-like GTPase superfamily. TrmE GTPase family.</text>
</comment>
<accession>Q2YZB8</accession>
<sequence length="459" mass="51309">MDLDTITSISTPMGEGAIGIVRLSGPQAVEIADKLYKGKHLLNDVPSHTINYGHIIDPESKEVVEEVMVSVLRAPKTFTREDIIEINCHGGILTINRVLELTMTYGARLAEPGEFTKRAFLNGRIDLSQAEAVMDFVRSKTDRASKVAMNQIEGRLSDLIKKQRQSILEILAQVEVNIDYPEYDDVEDATTEFLLEQSKEIKQEINRLLDTGAQGKIMREGLSTVIVGKPNVGKSSMLNNLIQDNKAIVTEVAGTTRDVLEEYVNVRGVPLRLVDTAGIRETEDIVEKIGVERSRKALSQADLILFVLNNNEALTQEDYTLYEVVKNEDVIVIVNKMDLEQNIDINEVKDMIGDTPLIQTSMLKQEGIDELEIQIRDLFFGGEVQNQDMTYVSNSRHISLLKQARQTIQDAIDAAESGVPMDMVQIDLTRTWEILGEIIGETASDELIDQLFSQFCLGK</sequence>
<protein>
    <recommendedName>
        <fullName evidence="1">tRNA modification GTPase MnmE</fullName>
        <ecNumber evidence="1">3.6.-.-</ecNumber>
    </recommendedName>
</protein>
<proteinExistence type="inferred from homology"/>
<organism>
    <name type="scientific">Staphylococcus aureus (strain bovine RF122 / ET3-1)</name>
    <dbReference type="NCBI Taxonomy" id="273036"/>
    <lineage>
        <taxon>Bacteria</taxon>
        <taxon>Bacillati</taxon>
        <taxon>Bacillota</taxon>
        <taxon>Bacilli</taxon>
        <taxon>Bacillales</taxon>
        <taxon>Staphylococcaceae</taxon>
        <taxon>Staphylococcus</taxon>
    </lineage>
</organism>
<keyword id="KW-0963">Cytoplasm</keyword>
<keyword id="KW-0342">GTP-binding</keyword>
<keyword id="KW-0378">Hydrolase</keyword>
<keyword id="KW-0460">Magnesium</keyword>
<keyword id="KW-0479">Metal-binding</keyword>
<keyword id="KW-0547">Nucleotide-binding</keyword>
<keyword id="KW-0630">Potassium</keyword>
<keyword id="KW-0819">tRNA processing</keyword>
<name>MNME_STAAB</name>
<dbReference type="EC" id="3.6.-.-" evidence="1"/>
<dbReference type="EMBL" id="AJ938182">
    <property type="protein sequence ID" value="CAI82276.1"/>
    <property type="molecule type" value="Genomic_DNA"/>
</dbReference>
<dbReference type="RefSeq" id="WP_000362505.1">
    <property type="nucleotide sequence ID" value="NC_007622.1"/>
</dbReference>
<dbReference type="SMR" id="Q2YZB8"/>
<dbReference type="KEGG" id="sab:SAB2588c"/>
<dbReference type="HOGENOM" id="CLU_019624_4_1_9"/>
<dbReference type="GO" id="GO:0005829">
    <property type="term" value="C:cytosol"/>
    <property type="evidence" value="ECO:0007669"/>
    <property type="project" value="TreeGrafter"/>
</dbReference>
<dbReference type="GO" id="GO:0005525">
    <property type="term" value="F:GTP binding"/>
    <property type="evidence" value="ECO:0007669"/>
    <property type="project" value="UniProtKB-UniRule"/>
</dbReference>
<dbReference type="GO" id="GO:0003924">
    <property type="term" value="F:GTPase activity"/>
    <property type="evidence" value="ECO:0007669"/>
    <property type="project" value="UniProtKB-UniRule"/>
</dbReference>
<dbReference type="GO" id="GO:0046872">
    <property type="term" value="F:metal ion binding"/>
    <property type="evidence" value="ECO:0007669"/>
    <property type="project" value="UniProtKB-KW"/>
</dbReference>
<dbReference type="GO" id="GO:0030488">
    <property type="term" value="P:tRNA methylation"/>
    <property type="evidence" value="ECO:0007669"/>
    <property type="project" value="TreeGrafter"/>
</dbReference>
<dbReference type="GO" id="GO:0002098">
    <property type="term" value="P:tRNA wobble uridine modification"/>
    <property type="evidence" value="ECO:0007669"/>
    <property type="project" value="TreeGrafter"/>
</dbReference>
<dbReference type="CDD" id="cd04164">
    <property type="entry name" value="trmE"/>
    <property type="match status" value="1"/>
</dbReference>
<dbReference type="CDD" id="cd14858">
    <property type="entry name" value="TrmE_N"/>
    <property type="match status" value="1"/>
</dbReference>
<dbReference type="FunFam" id="3.30.1360.120:FF:000003">
    <property type="entry name" value="tRNA modification GTPase MnmE"/>
    <property type="match status" value="1"/>
</dbReference>
<dbReference type="FunFam" id="3.40.50.300:FF:000494">
    <property type="entry name" value="tRNA modification GTPase MnmE"/>
    <property type="match status" value="1"/>
</dbReference>
<dbReference type="Gene3D" id="3.40.50.300">
    <property type="entry name" value="P-loop containing nucleotide triphosphate hydrolases"/>
    <property type="match status" value="1"/>
</dbReference>
<dbReference type="Gene3D" id="3.30.1360.120">
    <property type="entry name" value="Probable tRNA modification gtpase trme, domain 1"/>
    <property type="match status" value="1"/>
</dbReference>
<dbReference type="Gene3D" id="1.20.120.430">
    <property type="entry name" value="tRNA modification GTPase MnmE domain 2"/>
    <property type="match status" value="1"/>
</dbReference>
<dbReference type="HAMAP" id="MF_00379">
    <property type="entry name" value="GTPase_MnmE"/>
    <property type="match status" value="1"/>
</dbReference>
<dbReference type="InterPro" id="IPR031168">
    <property type="entry name" value="G_TrmE"/>
</dbReference>
<dbReference type="InterPro" id="IPR006073">
    <property type="entry name" value="GTP-bd"/>
</dbReference>
<dbReference type="InterPro" id="IPR018948">
    <property type="entry name" value="GTP-bd_TrmE_N"/>
</dbReference>
<dbReference type="InterPro" id="IPR004520">
    <property type="entry name" value="GTPase_MnmE"/>
</dbReference>
<dbReference type="InterPro" id="IPR027368">
    <property type="entry name" value="MnmE_dom2"/>
</dbReference>
<dbReference type="InterPro" id="IPR025867">
    <property type="entry name" value="MnmE_helical"/>
</dbReference>
<dbReference type="InterPro" id="IPR027417">
    <property type="entry name" value="P-loop_NTPase"/>
</dbReference>
<dbReference type="InterPro" id="IPR005225">
    <property type="entry name" value="Small_GTP-bd"/>
</dbReference>
<dbReference type="InterPro" id="IPR027266">
    <property type="entry name" value="TrmE/GcvT_dom1"/>
</dbReference>
<dbReference type="NCBIfam" id="TIGR00450">
    <property type="entry name" value="mnmE_trmE_thdF"/>
    <property type="match status" value="1"/>
</dbReference>
<dbReference type="NCBIfam" id="NF003661">
    <property type="entry name" value="PRK05291.1-3"/>
    <property type="match status" value="1"/>
</dbReference>
<dbReference type="NCBIfam" id="TIGR00231">
    <property type="entry name" value="small_GTP"/>
    <property type="match status" value="1"/>
</dbReference>
<dbReference type="PANTHER" id="PTHR42714">
    <property type="entry name" value="TRNA MODIFICATION GTPASE GTPBP3"/>
    <property type="match status" value="1"/>
</dbReference>
<dbReference type="PANTHER" id="PTHR42714:SF2">
    <property type="entry name" value="TRNA MODIFICATION GTPASE GTPBP3, MITOCHONDRIAL"/>
    <property type="match status" value="1"/>
</dbReference>
<dbReference type="Pfam" id="PF01926">
    <property type="entry name" value="MMR_HSR1"/>
    <property type="match status" value="1"/>
</dbReference>
<dbReference type="Pfam" id="PF12631">
    <property type="entry name" value="MnmE_helical"/>
    <property type="match status" value="1"/>
</dbReference>
<dbReference type="Pfam" id="PF10396">
    <property type="entry name" value="TrmE_N"/>
    <property type="match status" value="1"/>
</dbReference>
<dbReference type="PRINTS" id="PR00449">
    <property type="entry name" value="RASTRNSFRMNG"/>
</dbReference>
<dbReference type="SUPFAM" id="SSF52540">
    <property type="entry name" value="P-loop containing nucleoside triphosphate hydrolases"/>
    <property type="match status" value="1"/>
</dbReference>
<dbReference type="SUPFAM" id="SSF116878">
    <property type="entry name" value="TrmE connector domain"/>
    <property type="match status" value="1"/>
</dbReference>
<dbReference type="PROSITE" id="PS51709">
    <property type="entry name" value="G_TRME"/>
    <property type="match status" value="1"/>
</dbReference>